<evidence type="ECO:0000255" key="1">
    <source>
        <dbReference type="HAMAP-Rule" id="MF_00688"/>
    </source>
</evidence>
<comment type="function">
    <text evidence="1">Functions in the N-end rule pathway of protein degradation where it conjugates Leu, Phe and, less efficiently, Met from aminoacyl-tRNAs to the N-termini of proteins containing an N-terminal arginine or lysine.</text>
</comment>
<comment type="catalytic activity">
    <reaction evidence="1">
        <text>N-terminal L-lysyl-[protein] + L-leucyl-tRNA(Leu) = N-terminal L-leucyl-L-lysyl-[protein] + tRNA(Leu) + H(+)</text>
        <dbReference type="Rhea" id="RHEA:12340"/>
        <dbReference type="Rhea" id="RHEA-COMP:9613"/>
        <dbReference type="Rhea" id="RHEA-COMP:9622"/>
        <dbReference type="Rhea" id="RHEA-COMP:12670"/>
        <dbReference type="Rhea" id="RHEA-COMP:12671"/>
        <dbReference type="ChEBI" id="CHEBI:15378"/>
        <dbReference type="ChEBI" id="CHEBI:65249"/>
        <dbReference type="ChEBI" id="CHEBI:78442"/>
        <dbReference type="ChEBI" id="CHEBI:78494"/>
        <dbReference type="ChEBI" id="CHEBI:133043"/>
        <dbReference type="EC" id="2.3.2.6"/>
    </reaction>
</comment>
<comment type="catalytic activity">
    <reaction evidence="1">
        <text>N-terminal L-arginyl-[protein] + L-leucyl-tRNA(Leu) = N-terminal L-leucyl-L-arginyl-[protein] + tRNA(Leu) + H(+)</text>
        <dbReference type="Rhea" id="RHEA:50416"/>
        <dbReference type="Rhea" id="RHEA-COMP:9613"/>
        <dbReference type="Rhea" id="RHEA-COMP:9622"/>
        <dbReference type="Rhea" id="RHEA-COMP:12672"/>
        <dbReference type="Rhea" id="RHEA-COMP:12673"/>
        <dbReference type="ChEBI" id="CHEBI:15378"/>
        <dbReference type="ChEBI" id="CHEBI:64719"/>
        <dbReference type="ChEBI" id="CHEBI:78442"/>
        <dbReference type="ChEBI" id="CHEBI:78494"/>
        <dbReference type="ChEBI" id="CHEBI:133044"/>
        <dbReference type="EC" id="2.3.2.6"/>
    </reaction>
</comment>
<comment type="catalytic activity">
    <reaction evidence="1">
        <text>L-phenylalanyl-tRNA(Phe) + an N-terminal L-alpha-aminoacyl-[protein] = an N-terminal L-phenylalanyl-L-alpha-aminoacyl-[protein] + tRNA(Phe)</text>
        <dbReference type="Rhea" id="RHEA:43632"/>
        <dbReference type="Rhea" id="RHEA-COMP:9668"/>
        <dbReference type="Rhea" id="RHEA-COMP:9699"/>
        <dbReference type="Rhea" id="RHEA-COMP:10636"/>
        <dbReference type="Rhea" id="RHEA-COMP:10637"/>
        <dbReference type="ChEBI" id="CHEBI:78442"/>
        <dbReference type="ChEBI" id="CHEBI:78531"/>
        <dbReference type="ChEBI" id="CHEBI:78597"/>
        <dbReference type="ChEBI" id="CHEBI:83561"/>
        <dbReference type="EC" id="2.3.2.6"/>
    </reaction>
</comment>
<comment type="subcellular location">
    <subcellularLocation>
        <location evidence="1">Cytoplasm</location>
    </subcellularLocation>
</comment>
<comment type="similarity">
    <text evidence="1">Belongs to the L/F-transferase family.</text>
</comment>
<organism>
    <name type="scientific">Rhodopseudomonas palustris (strain BisB18)</name>
    <dbReference type="NCBI Taxonomy" id="316056"/>
    <lineage>
        <taxon>Bacteria</taxon>
        <taxon>Pseudomonadati</taxon>
        <taxon>Pseudomonadota</taxon>
        <taxon>Alphaproteobacteria</taxon>
        <taxon>Hyphomicrobiales</taxon>
        <taxon>Nitrobacteraceae</taxon>
        <taxon>Rhodopseudomonas</taxon>
    </lineage>
</organism>
<proteinExistence type="inferred from homology"/>
<name>LFTR_RHOPB</name>
<sequence>MTGRDSASSDITPEVLLRAYACGIFPMAESVDDPTLFWVEPERRGIIPLDGFKVASRLARTVRSDVFTVSVDRAFKQVIDGCAAPQPGREDTWINRRIRELYIGLYQLGHCHSVEVWQNDDLVGGLYGVNLGRAFFGESMFHRARDASKVALVHLVARLIEGGFVLLDTQFVTEHLRTFGATEVPRRRYRAMLDVAITGAADFARLPTEQPIAGTRALAIISGREGLGRG</sequence>
<protein>
    <recommendedName>
        <fullName evidence="1">Leucyl/phenylalanyl-tRNA--protein transferase</fullName>
        <ecNumber evidence="1">2.3.2.6</ecNumber>
    </recommendedName>
    <alternativeName>
        <fullName evidence="1">L/F-transferase</fullName>
    </alternativeName>
    <alternativeName>
        <fullName evidence="1">Leucyltransferase</fullName>
    </alternativeName>
    <alternativeName>
        <fullName evidence="1">Phenyalanyltransferase</fullName>
    </alternativeName>
</protein>
<gene>
    <name evidence="1" type="primary">aat1</name>
    <name type="ordered locus">RPC_2875</name>
</gene>
<gene>
    <name evidence="1" type="primary">aat2</name>
    <name type="ordered locus">RPC_2882</name>
</gene>
<dbReference type="EC" id="2.3.2.6" evidence="1"/>
<dbReference type="EMBL" id="CP000301">
    <property type="protein sequence ID" value="ABD88423.1"/>
    <property type="molecule type" value="Genomic_DNA"/>
</dbReference>
<dbReference type="EMBL" id="CP000301">
    <property type="protein sequence ID" value="ABD88430.1"/>
    <property type="molecule type" value="Genomic_DNA"/>
</dbReference>
<dbReference type="SMR" id="Q213K6"/>
<dbReference type="STRING" id="316056.RPC_2875"/>
<dbReference type="KEGG" id="rpc:RPC_2875"/>
<dbReference type="KEGG" id="rpc:RPC_2882"/>
<dbReference type="eggNOG" id="COG2360">
    <property type="taxonomic scope" value="Bacteria"/>
</dbReference>
<dbReference type="HOGENOM" id="CLU_075045_1_1_5"/>
<dbReference type="OrthoDB" id="9790282at2"/>
<dbReference type="GO" id="GO:0005737">
    <property type="term" value="C:cytoplasm"/>
    <property type="evidence" value="ECO:0007669"/>
    <property type="project" value="UniProtKB-SubCell"/>
</dbReference>
<dbReference type="GO" id="GO:0008914">
    <property type="term" value="F:leucyl-tRNA--protein transferase activity"/>
    <property type="evidence" value="ECO:0007669"/>
    <property type="project" value="UniProtKB-UniRule"/>
</dbReference>
<dbReference type="GO" id="GO:0030163">
    <property type="term" value="P:protein catabolic process"/>
    <property type="evidence" value="ECO:0007669"/>
    <property type="project" value="UniProtKB-UniRule"/>
</dbReference>
<dbReference type="FunFam" id="3.40.630.70:FF:000001">
    <property type="entry name" value="Leucyl/phenylalanyl-tRNA--protein transferase"/>
    <property type="match status" value="1"/>
</dbReference>
<dbReference type="Gene3D" id="3.40.630.70">
    <property type="entry name" value="Leucyl/phenylalanyl-tRNA-protein transferase, C-terminal domain"/>
    <property type="match status" value="1"/>
</dbReference>
<dbReference type="Gene3D" id="3.30.70.3550">
    <property type="entry name" value="Leucyl/phenylalanyl-tRNA-protein transferase, N-terminal domain"/>
    <property type="match status" value="1"/>
</dbReference>
<dbReference type="HAMAP" id="MF_00688">
    <property type="entry name" value="Leu_Phe_trans"/>
    <property type="match status" value="1"/>
</dbReference>
<dbReference type="InterPro" id="IPR016181">
    <property type="entry name" value="Acyl_CoA_acyltransferase"/>
</dbReference>
<dbReference type="InterPro" id="IPR004616">
    <property type="entry name" value="Leu/Phe-tRNA_Trfase"/>
</dbReference>
<dbReference type="InterPro" id="IPR042203">
    <property type="entry name" value="Leu/Phe-tRNA_Trfase_C"/>
</dbReference>
<dbReference type="InterPro" id="IPR042221">
    <property type="entry name" value="Leu/Phe-tRNA_Trfase_N"/>
</dbReference>
<dbReference type="NCBIfam" id="TIGR00667">
    <property type="entry name" value="aat"/>
    <property type="match status" value="1"/>
</dbReference>
<dbReference type="PANTHER" id="PTHR30098">
    <property type="entry name" value="LEUCYL/PHENYLALANYL-TRNA--PROTEIN TRANSFERASE"/>
    <property type="match status" value="1"/>
</dbReference>
<dbReference type="PANTHER" id="PTHR30098:SF2">
    <property type="entry name" value="LEUCYL_PHENYLALANYL-TRNA--PROTEIN TRANSFERASE"/>
    <property type="match status" value="1"/>
</dbReference>
<dbReference type="Pfam" id="PF03588">
    <property type="entry name" value="Leu_Phe_trans"/>
    <property type="match status" value="1"/>
</dbReference>
<dbReference type="SUPFAM" id="SSF55729">
    <property type="entry name" value="Acyl-CoA N-acyltransferases (Nat)"/>
    <property type="match status" value="1"/>
</dbReference>
<accession>Q213K6</accession>
<reference key="1">
    <citation type="submission" date="2006-03" db="EMBL/GenBank/DDBJ databases">
        <title>Complete sequence of Rhodopseudomonas palustris BisB18.</title>
        <authorList>
            <consortium name="US DOE Joint Genome Institute"/>
            <person name="Copeland A."/>
            <person name="Lucas S."/>
            <person name="Lapidus A."/>
            <person name="Barry K."/>
            <person name="Detter J.C."/>
            <person name="Glavina del Rio T."/>
            <person name="Hammon N."/>
            <person name="Israni S."/>
            <person name="Dalin E."/>
            <person name="Tice H."/>
            <person name="Pitluck S."/>
            <person name="Chain P."/>
            <person name="Malfatti S."/>
            <person name="Shin M."/>
            <person name="Vergez L."/>
            <person name="Schmutz J."/>
            <person name="Larimer F."/>
            <person name="Land M."/>
            <person name="Hauser L."/>
            <person name="Pelletier D.A."/>
            <person name="Kyrpides N."/>
            <person name="Anderson I."/>
            <person name="Oda Y."/>
            <person name="Harwood C.S."/>
            <person name="Richardson P."/>
        </authorList>
    </citation>
    <scope>NUCLEOTIDE SEQUENCE [LARGE SCALE GENOMIC DNA]</scope>
    <source>
        <strain>BisB18</strain>
    </source>
</reference>
<feature type="chain" id="PRO_0000258089" description="Leucyl/phenylalanyl-tRNA--protein transferase">
    <location>
        <begin position="1"/>
        <end position="230"/>
    </location>
</feature>
<keyword id="KW-0012">Acyltransferase</keyword>
<keyword id="KW-0963">Cytoplasm</keyword>
<keyword id="KW-0808">Transferase</keyword>